<dbReference type="EMBL" id="EF405873">
    <property type="protein sequence ID" value="ABN54808.1"/>
    <property type="molecule type" value="mRNA"/>
</dbReference>
<dbReference type="SMR" id="A3FM55"/>
<dbReference type="GO" id="GO:0005576">
    <property type="term" value="C:extracellular region"/>
    <property type="evidence" value="ECO:0007669"/>
    <property type="project" value="UniProtKB-SubCell"/>
</dbReference>
<dbReference type="GO" id="GO:0030246">
    <property type="term" value="F:carbohydrate binding"/>
    <property type="evidence" value="ECO:0007669"/>
    <property type="project" value="UniProtKB-KW"/>
</dbReference>
<dbReference type="GO" id="GO:0046872">
    <property type="term" value="F:metal ion binding"/>
    <property type="evidence" value="ECO:0007669"/>
    <property type="project" value="UniProtKB-KW"/>
</dbReference>
<dbReference type="FunFam" id="3.10.100.10:FF:000087">
    <property type="entry name" value="Snaclec rhodocetin subunit delta"/>
    <property type="match status" value="1"/>
</dbReference>
<dbReference type="Gene3D" id="3.10.100.10">
    <property type="entry name" value="Mannose-Binding Protein A, subunit A"/>
    <property type="match status" value="1"/>
</dbReference>
<dbReference type="InterPro" id="IPR001304">
    <property type="entry name" value="C-type_lectin-like"/>
</dbReference>
<dbReference type="InterPro" id="IPR016186">
    <property type="entry name" value="C-type_lectin-like/link_sf"/>
</dbReference>
<dbReference type="InterPro" id="IPR050111">
    <property type="entry name" value="C-type_lectin/snaclec_domain"/>
</dbReference>
<dbReference type="InterPro" id="IPR018378">
    <property type="entry name" value="C-type_lectin_CS"/>
</dbReference>
<dbReference type="InterPro" id="IPR016187">
    <property type="entry name" value="CTDL_fold"/>
</dbReference>
<dbReference type="PANTHER" id="PTHR22803">
    <property type="entry name" value="MANNOSE, PHOSPHOLIPASE, LECTIN RECEPTOR RELATED"/>
    <property type="match status" value="1"/>
</dbReference>
<dbReference type="Pfam" id="PF00059">
    <property type="entry name" value="Lectin_C"/>
    <property type="match status" value="1"/>
</dbReference>
<dbReference type="PRINTS" id="PR01504">
    <property type="entry name" value="PNCREATITSAP"/>
</dbReference>
<dbReference type="SMART" id="SM00034">
    <property type="entry name" value="CLECT"/>
    <property type="match status" value="1"/>
</dbReference>
<dbReference type="SUPFAM" id="SSF56436">
    <property type="entry name" value="C-type lectin-like"/>
    <property type="match status" value="1"/>
</dbReference>
<dbReference type="PROSITE" id="PS00615">
    <property type="entry name" value="C_TYPE_LECTIN_1"/>
    <property type="match status" value="1"/>
</dbReference>
<dbReference type="PROSITE" id="PS50041">
    <property type="entry name" value="C_TYPE_LECTIN_2"/>
    <property type="match status" value="1"/>
</dbReference>
<name>LECM1_HYDHA</name>
<protein>
    <recommendedName>
        <fullName>C-type lectin 1</fullName>
        <shortName>CTL</shortName>
    </recommendedName>
</protein>
<reference key="1">
    <citation type="submission" date="2007-01" db="EMBL/GenBank/DDBJ databases">
        <title>The study of the neurotoxins in sea snake using cDNA phage display technology.</title>
        <authorList>
            <person name="Tan T."/>
            <person name="Bi Q."/>
            <person name="Xiang X."/>
            <person name="Zhu S."/>
        </authorList>
    </citation>
    <scope>NUCLEOTIDE SEQUENCE [MRNA]</scope>
    <source>
        <tissue>Venom gland</tissue>
    </source>
</reference>
<organism>
    <name type="scientific">Hydrophis hardwickii</name>
    <name type="common">Hardwick's spine-bellied seasnake</name>
    <name type="synonym">Lapemis hardwickii</name>
    <dbReference type="NCBI Taxonomy" id="8781"/>
    <lineage>
        <taxon>Eukaryota</taxon>
        <taxon>Metazoa</taxon>
        <taxon>Chordata</taxon>
        <taxon>Craniata</taxon>
        <taxon>Vertebrata</taxon>
        <taxon>Euteleostomi</taxon>
        <taxon>Lepidosauria</taxon>
        <taxon>Squamata</taxon>
        <taxon>Bifurcata</taxon>
        <taxon>Unidentata</taxon>
        <taxon>Episquamata</taxon>
        <taxon>Toxicofera</taxon>
        <taxon>Serpentes</taxon>
        <taxon>Colubroidea</taxon>
        <taxon>Elapidae</taxon>
        <taxon>Hydrophiinae</taxon>
        <taxon>Hydrophis</taxon>
    </lineage>
</organism>
<accession>A3FM55</accession>
<sequence length="164" mass="18920">MGRFLFASLGLLVVAFSLSGTGANLYCPFDWLSYNVSCYKLFYSLVTWDQAQRFCVEQQENSQLASIHDVGESVKLSNYISQRWGFFDVWMGLRLSKRNGIWEWSDGSNLTYTSWKEGEPNNLFNMEFCAVLSAGTRYLQWNDKKCTLLHPFLCQFQPRSEANG</sequence>
<feature type="signal peptide" evidence="1">
    <location>
        <begin position="1"/>
        <end position="23"/>
    </location>
</feature>
<feature type="chain" id="PRO_0000355278" description="C-type lectin 1">
    <location>
        <begin position="24"/>
        <end position="164"/>
    </location>
</feature>
<feature type="domain" description="C-type lectin" evidence="3">
    <location>
        <begin position="34"/>
        <end position="155"/>
    </location>
</feature>
<feature type="short sequence motif" description="Mannose-binding">
    <location>
        <begin position="119"/>
        <end position="121"/>
    </location>
</feature>
<feature type="binding site" evidence="1">
    <location>
        <position position="127"/>
    </location>
    <ligand>
        <name>Ca(2+)</name>
        <dbReference type="ChEBI" id="CHEBI:29108"/>
    </ligand>
</feature>
<feature type="binding site" evidence="1">
    <location>
        <position position="142"/>
    </location>
    <ligand>
        <name>Ca(2+)</name>
        <dbReference type="ChEBI" id="CHEBI:29108"/>
    </ligand>
</feature>
<feature type="binding site" evidence="1">
    <location>
        <position position="143"/>
    </location>
    <ligand>
        <name>Ca(2+)</name>
        <dbReference type="ChEBI" id="CHEBI:29108"/>
    </ligand>
</feature>
<feature type="glycosylation site" description="N-linked (GlcNAc...) asparagine" evidence="2">
    <location>
        <position position="35"/>
    </location>
</feature>
<feature type="glycosylation site" description="N-linked (GlcNAc...) asparagine" evidence="2">
    <location>
        <position position="109"/>
    </location>
</feature>
<feature type="disulfide bond" evidence="3">
    <location>
        <begin position="27"/>
        <end position="38"/>
    </location>
</feature>
<feature type="disulfide bond" evidence="3">
    <location>
        <begin position="55"/>
        <end position="154"/>
    </location>
</feature>
<feature type="disulfide bond" evidence="3">
    <location>
        <begin position="129"/>
        <end position="146"/>
    </location>
</feature>
<keyword id="KW-0106">Calcium</keyword>
<keyword id="KW-1015">Disulfide bond</keyword>
<keyword id="KW-0325">Glycoprotein</keyword>
<keyword id="KW-0430">Lectin</keyword>
<keyword id="KW-0479">Metal-binding</keyword>
<keyword id="KW-0964">Secreted</keyword>
<keyword id="KW-0732">Signal</keyword>
<comment type="function">
    <text evidence="1">Mannose-binding lectin which recognizes specific carbohydrate structures and agglutinates a variety of animal cells by binding to cell-surface glycoproteins and glycolipids. May be a calcium-dependent lectin (By similarity).</text>
</comment>
<comment type="subcellular location">
    <subcellularLocation>
        <location evidence="1">Secreted</location>
    </subcellularLocation>
</comment>
<comment type="tissue specificity">
    <text>Expressed by the venom gland.</text>
</comment>
<comment type="similarity">
    <text evidence="4">Belongs to the true venom lectin family.</text>
</comment>
<evidence type="ECO:0000250" key="1"/>
<evidence type="ECO:0000255" key="2"/>
<evidence type="ECO:0000255" key="3">
    <source>
        <dbReference type="PROSITE-ProRule" id="PRU00040"/>
    </source>
</evidence>
<evidence type="ECO:0000305" key="4"/>
<proteinExistence type="evidence at transcript level"/>